<keyword id="KW-0687">Ribonucleoprotein</keyword>
<keyword id="KW-0689">Ribosomal protein</keyword>
<evidence type="ECO:0000255" key="1">
    <source>
        <dbReference type="HAMAP-Rule" id="MF_00358"/>
    </source>
</evidence>
<evidence type="ECO:0000256" key="2">
    <source>
        <dbReference type="SAM" id="MobiDB-lite"/>
    </source>
</evidence>
<evidence type="ECO:0000305" key="3"/>
<feature type="chain" id="PRO_1000005188" description="Small ribosomal subunit protein bS21">
    <location>
        <begin position="1"/>
        <end position="71"/>
    </location>
</feature>
<feature type="region of interest" description="Disordered" evidence="2">
    <location>
        <begin position="43"/>
        <end position="71"/>
    </location>
</feature>
<feature type="compositionally biased region" description="Basic residues" evidence="2">
    <location>
        <begin position="46"/>
        <end position="59"/>
    </location>
</feature>
<feature type="compositionally biased region" description="Basic and acidic residues" evidence="2">
    <location>
        <begin position="60"/>
        <end position="71"/>
    </location>
</feature>
<dbReference type="EMBL" id="CP000668">
    <property type="protein sequence ID" value="ABP38842.1"/>
    <property type="molecule type" value="Genomic_DNA"/>
</dbReference>
<dbReference type="RefSeq" id="WP_001144069.1">
    <property type="nucleotide sequence ID" value="NZ_CP009715.1"/>
</dbReference>
<dbReference type="SMR" id="A4THT0"/>
<dbReference type="GeneID" id="98390195"/>
<dbReference type="KEGG" id="ypp:YPDSF_0429"/>
<dbReference type="PATRIC" id="fig|386656.14.peg.1736"/>
<dbReference type="GO" id="GO:1990904">
    <property type="term" value="C:ribonucleoprotein complex"/>
    <property type="evidence" value="ECO:0007669"/>
    <property type="project" value="UniProtKB-KW"/>
</dbReference>
<dbReference type="GO" id="GO:0005840">
    <property type="term" value="C:ribosome"/>
    <property type="evidence" value="ECO:0007669"/>
    <property type="project" value="UniProtKB-KW"/>
</dbReference>
<dbReference type="GO" id="GO:0003735">
    <property type="term" value="F:structural constituent of ribosome"/>
    <property type="evidence" value="ECO:0007669"/>
    <property type="project" value="InterPro"/>
</dbReference>
<dbReference type="GO" id="GO:0006412">
    <property type="term" value="P:translation"/>
    <property type="evidence" value="ECO:0007669"/>
    <property type="project" value="UniProtKB-UniRule"/>
</dbReference>
<dbReference type="FunFam" id="1.20.5.1150:FF:000001">
    <property type="entry name" value="30S ribosomal protein S21"/>
    <property type="match status" value="1"/>
</dbReference>
<dbReference type="Gene3D" id="1.20.5.1150">
    <property type="entry name" value="Ribosomal protein S8"/>
    <property type="match status" value="1"/>
</dbReference>
<dbReference type="HAMAP" id="MF_00358">
    <property type="entry name" value="Ribosomal_bS21"/>
    <property type="match status" value="1"/>
</dbReference>
<dbReference type="InterPro" id="IPR001911">
    <property type="entry name" value="Ribosomal_bS21"/>
</dbReference>
<dbReference type="InterPro" id="IPR018278">
    <property type="entry name" value="Ribosomal_bS21_CS"/>
</dbReference>
<dbReference type="InterPro" id="IPR038380">
    <property type="entry name" value="Ribosomal_bS21_sf"/>
</dbReference>
<dbReference type="NCBIfam" id="TIGR00030">
    <property type="entry name" value="S21p"/>
    <property type="match status" value="1"/>
</dbReference>
<dbReference type="PANTHER" id="PTHR21109">
    <property type="entry name" value="MITOCHONDRIAL 28S RIBOSOMAL PROTEIN S21"/>
    <property type="match status" value="1"/>
</dbReference>
<dbReference type="PANTHER" id="PTHR21109:SF22">
    <property type="entry name" value="SMALL RIBOSOMAL SUBUNIT PROTEIN BS21"/>
    <property type="match status" value="1"/>
</dbReference>
<dbReference type="Pfam" id="PF01165">
    <property type="entry name" value="Ribosomal_S21"/>
    <property type="match status" value="1"/>
</dbReference>
<dbReference type="PRINTS" id="PR00976">
    <property type="entry name" value="RIBOSOMALS21"/>
</dbReference>
<dbReference type="PROSITE" id="PS01181">
    <property type="entry name" value="RIBOSOMAL_S21"/>
    <property type="match status" value="1"/>
</dbReference>
<name>RS21_YERPP</name>
<protein>
    <recommendedName>
        <fullName evidence="1">Small ribosomal subunit protein bS21</fullName>
    </recommendedName>
    <alternativeName>
        <fullName evidence="3">30S ribosomal protein S21</fullName>
    </alternativeName>
</protein>
<reference key="1">
    <citation type="submission" date="2007-02" db="EMBL/GenBank/DDBJ databases">
        <title>Complete sequence of chromosome of Yersinia pestis Pestoides F.</title>
        <authorList>
            <consortium name="US DOE Joint Genome Institute"/>
            <person name="Copeland A."/>
            <person name="Lucas S."/>
            <person name="Lapidus A."/>
            <person name="Barry K."/>
            <person name="Detter J.C."/>
            <person name="Glavina del Rio T."/>
            <person name="Hammon N."/>
            <person name="Israni S."/>
            <person name="Dalin E."/>
            <person name="Tice H."/>
            <person name="Pitluck S."/>
            <person name="Di Bartolo G."/>
            <person name="Chain P."/>
            <person name="Malfatti S."/>
            <person name="Shin M."/>
            <person name="Vergez L."/>
            <person name="Schmutz J."/>
            <person name="Larimer F."/>
            <person name="Land M."/>
            <person name="Hauser L."/>
            <person name="Worsham P."/>
            <person name="Chu M."/>
            <person name="Bearden S."/>
            <person name="Garcia E."/>
            <person name="Richardson P."/>
        </authorList>
    </citation>
    <scope>NUCLEOTIDE SEQUENCE [LARGE SCALE GENOMIC DNA]</scope>
    <source>
        <strain>Pestoides F</strain>
    </source>
</reference>
<comment type="similarity">
    <text evidence="1">Belongs to the bacterial ribosomal protein bS21 family.</text>
</comment>
<accession>A4THT0</accession>
<proteinExistence type="inferred from homology"/>
<sequence>MPVIKVRENEPFDVALRRFKRSCEKAGVLAEVRRREFYEKPTTERKRAKASAVKRHAKKLARENARRTRLY</sequence>
<gene>
    <name evidence="1" type="primary">rpsU</name>
    <name type="ordered locus">YPDSF_0429</name>
</gene>
<organism>
    <name type="scientific">Yersinia pestis (strain Pestoides F)</name>
    <dbReference type="NCBI Taxonomy" id="386656"/>
    <lineage>
        <taxon>Bacteria</taxon>
        <taxon>Pseudomonadati</taxon>
        <taxon>Pseudomonadota</taxon>
        <taxon>Gammaproteobacteria</taxon>
        <taxon>Enterobacterales</taxon>
        <taxon>Yersiniaceae</taxon>
        <taxon>Yersinia</taxon>
    </lineage>
</organism>